<proteinExistence type="evidence at transcript level"/>
<comment type="subcellular location">
    <subcellularLocation>
        <location evidence="1">Cytoplasm</location>
        <location evidence="1">Cytosol</location>
    </subcellularLocation>
</comment>
<comment type="similarity">
    <text evidence="3">Belongs to the paladin family.</text>
</comment>
<comment type="sequence caution" evidence="3">
    <conflict type="erroneous initiation">
        <sequence resource="EMBL-CDS" id="AAN03688"/>
    </conflict>
</comment>
<comment type="sequence caution" evidence="3">
    <conflict type="erroneous initiation">
        <sequence resource="EMBL-CDS" id="CAG31799"/>
    </conflict>
</comment>
<keyword id="KW-0963">Cytoplasm</keyword>
<keyword id="KW-0449">Lipoprotein</keyword>
<keyword id="KW-0519">Myristate</keyword>
<keyword id="KW-1185">Reference proteome</keyword>
<protein>
    <recommendedName>
        <fullName>Paladin</fullName>
    </recommendedName>
</protein>
<name>PALD_CHICK</name>
<feature type="initiator methionine" description="Removed" evidence="2">
    <location>
        <position position="1"/>
    </location>
</feature>
<feature type="chain" id="PRO_0000286132" description="Paladin">
    <location>
        <begin position="2"/>
        <end position="868"/>
    </location>
</feature>
<feature type="lipid moiety-binding region" description="N-myristoyl glycine" evidence="2">
    <location>
        <position position="2"/>
    </location>
</feature>
<feature type="sequence conflict" description="In Ref. 2; CAG31799." evidence="3" ref="2">
    <original>T</original>
    <variation>A</variation>
    <location>
        <position position="763"/>
    </location>
</feature>
<dbReference type="EMBL" id="AF411975">
    <property type="protein sequence ID" value="AAN03688.1"/>
    <property type="status" value="ALT_INIT"/>
    <property type="molecule type" value="mRNA"/>
</dbReference>
<dbReference type="EMBL" id="AJ720140">
    <property type="protein sequence ID" value="CAG31799.1"/>
    <property type="status" value="ALT_INIT"/>
    <property type="molecule type" value="mRNA"/>
</dbReference>
<dbReference type="RefSeq" id="NP_989440.2">
    <property type="nucleotide sequence ID" value="NM_204109.2"/>
</dbReference>
<dbReference type="FunCoup" id="Q8JHZ8">
    <property type="interactions" value="52"/>
</dbReference>
<dbReference type="STRING" id="9031.ENSGALP00000051916"/>
<dbReference type="PaxDb" id="9031-ENSGALP00000007093"/>
<dbReference type="GeneID" id="373898"/>
<dbReference type="KEGG" id="gga:373898"/>
<dbReference type="CTD" id="27143"/>
<dbReference type="VEuPathDB" id="HostDB:geneid_373898"/>
<dbReference type="eggNOG" id="ENOG502QQ90">
    <property type="taxonomic scope" value="Eukaryota"/>
</dbReference>
<dbReference type="InParanoid" id="Q8JHZ8"/>
<dbReference type="OrthoDB" id="66369at2759"/>
<dbReference type="PhylomeDB" id="Q8JHZ8"/>
<dbReference type="PRO" id="PR:Q8JHZ8"/>
<dbReference type="Proteomes" id="UP000000539">
    <property type="component" value="Unassembled WGS sequence"/>
</dbReference>
<dbReference type="GO" id="GO:0005737">
    <property type="term" value="C:cytoplasm"/>
    <property type="evidence" value="ECO:0000318"/>
    <property type="project" value="GO_Central"/>
</dbReference>
<dbReference type="GO" id="GO:0005829">
    <property type="term" value="C:cytosol"/>
    <property type="evidence" value="ECO:0007669"/>
    <property type="project" value="UniProtKB-SubCell"/>
</dbReference>
<dbReference type="GO" id="GO:0005634">
    <property type="term" value="C:nucleus"/>
    <property type="evidence" value="ECO:0000318"/>
    <property type="project" value="GO_Central"/>
</dbReference>
<dbReference type="GO" id="GO:0004725">
    <property type="term" value="F:protein tyrosine phosphatase activity"/>
    <property type="evidence" value="ECO:0000318"/>
    <property type="project" value="GO_Central"/>
</dbReference>
<dbReference type="CDD" id="cd17660">
    <property type="entry name" value="PTP_paladin_2"/>
    <property type="match status" value="1"/>
</dbReference>
<dbReference type="FunFam" id="3.90.190.10:FF:000100">
    <property type="entry name" value="Phosphatase domain-containing paladin 1b"/>
    <property type="match status" value="1"/>
</dbReference>
<dbReference type="Gene3D" id="3.90.190.10">
    <property type="entry name" value="Protein tyrosine phosphatase superfamily"/>
    <property type="match status" value="2"/>
</dbReference>
<dbReference type="InterPro" id="IPR029021">
    <property type="entry name" value="Prot-tyrosine_phosphatase-like"/>
</dbReference>
<dbReference type="InterPro" id="IPR050561">
    <property type="entry name" value="PTP"/>
</dbReference>
<dbReference type="PANTHER" id="PTHR23339">
    <property type="entry name" value="TYROSINE SPECIFIC PROTEIN PHOSPHATASE AND DUAL SPECIFICITY PROTEIN PHOSPHATASE"/>
    <property type="match status" value="1"/>
</dbReference>
<dbReference type="Pfam" id="PF14566">
    <property type="entry name" value="PTPlike_phytase"/>
    <property type="match status" value="2"/>
</dbReference>
<dbReference type="SMART" id="SM01301">
    <property type="entry name" value="PTPlike_phytase"/>
    <property type="match status" value="2"/>
</dbReference>
<dbReference type="SUPFAM" id="SSF52799">
    <property type="entry name" value="(Phosphotyrosine protein) phosphatases II"/>
    <property type="match status" value="2"/>
</dbReference>
<reference key="1">
    <citation type="submission" date="2001-08" db="EMBL/GenBank/DDBJ databases">
        <title>Gao/i targeting of direct interactors for degradation by the ubiquitin-dependent proteasome system.</title>
        <authorList>
            <person name="Jordan J.D."/>
            <person name="Iyengar R."/>
        </authorList>
    </citation>
    <scope>NUCLEOTIDE SEQUENCE [MRNA]</scope>
</reference>
<reference key="2">
    <citation type="journal article" date="2005" name="Genome Biol.">
        <title>Full-length cDNAs from chicken bursal lymphocytes to facilitate gene function analysis.</title>
        <authorList>
            <person name="Caldwell R.B."/>
            <person name="Kierzek A.M."/>
            <person name="Arakawa H."/>
            <person name="Bezzubov Y."/>
            <person name="Zaim J."/>
            <person name="Fiedler P."/>
            <person name="Kutter S."/>
            <person name="Blagodatski A."/>
            <person name="Kostovska D."/>
            <person name="Koter M."/>
            <person name="Plachy J."/>
            <person name="Carninci P."/>
            <person name="Hayashizaki Y."/>
            <person name="Buerstedde J.-M."/>
        </authorList>
    </citation>
    <scope>NUCLEOTIDE SEQUENCE [LARGE SCALE MRNA]</scope>
    <source>
        <strain>CB</strain>
        <tissue>Bursa of Fabricius</tissue>
    </source>
</reference>
<gene>
    <name type="primary">PALD1</name>
    <name type="synonym">PALD</name>
    <name type="ORF">RCJMB04_11g7</name>
</gene>
<evidence type="ECO:0000250" key="1"/>
<evidence type="ECO:0000255" key="2"/>
<evidence type="ECO:0000305" key="3"/>
<organism>
    <name type="scientific">Gallus gallus</name>
    <name type="common">Chicken</name>
    <dbReference type="NCBI Taxonomy" id="9031"/>
    <lineage>
        <taxon>Eukaryota</taxon>
        <taxon>Metazoa</taxon>
        <taxon>Chordata</taxon>
        <taxon>Craniata</taxon>
        <taxon>Vertebrata</taxon>
        <taxon>Euteleostomi</taxon>
        <taxon>Archelosauria</taxon>
        <taxon>Archosauria</taxon>
        <taxon>Dinosauria</taxon>
        <taxon>Saurischia</taxon>
        <taxon>Theropoda</taxon>
        <taxon>Coelurosauria</taxon>
        <taxon>Aves</taxon>
        <taxon>Neognathae</taxon>
        <taxon>Galloanserae</taxon>
        <taxon>Galliformes</taxon>
        <taxon>Phasianidae</taxon>
        <taxon>Phasianinae</taxon>
        <taxon>Gallus</taxon>
    </lineage>
</organism>
<accession>Q8JHZ8</accession>
<accession>Q5ZKE4</accession>
<sequence length="868" mass="99632">MGTTASTAQQTVSASAFESVHGIGTMEDQRSLSIHSFQTLGLHNSKAKSIITNKVAPVVITYNCREEFQIHDDLLKANYTVGRISDATLEHYLVQGKYFMVRDVYSKLDVLNTTASCGAPNFRQAKGGYAVFGMGQPSLGGFKLVLQKLQREGHKECVFFCVREEPVLFLRVESDFVPYTPRGKENLHENLHSLRRGLRVEDLELTIRKEIHDFAQLSEGVYYVYNDIERFRDEPHTVRVQGEEDIHVTEEVYRRPIFLLPTYRYHRLPLPVDGAPLEEQFDAFICFLRESSGLLLRDPSRPPPALLFSCQTGVGRTNLAMALGTLILHHHRGAAPKPDPPHPAKMPPRARFRVIQSFIEMVPKGQQMVEEVDSVIASCSEMHDMKEAIYESKKKLEGIGEDYQIQGNSTKEYFLQRTLQSLERYFYLIAFNYYLHEQYPLGFALSFSRWMCRHPELYRLQAIMNSSELTITGDLITKGTRVLVVDERFCPDVLSTVKEMSVANFRRVPKMPIYGTAQPSSKALGSVLRYLTDAKRKHSRILWVSLREEVVLEGNEQIYTLREPGSLDQLIPVPVSTPEQLEKLESTLKGDLLKSQKWLEVYLEAEKQMKMFKSCLTTQEIFNQHKSTCQGLTYRRIPIPDFCAPKEQDFDRLLEAMKSALAEDSQTAFVFNCASGRGRTTTAMVIAVLTLWHFNGIPEMSEEEIVSVPDAKYTKGEFEVVMKVVQLLPDGHRMKKEVDMALDTVSETMTPMHYHLREIIICTYRQGRSGKDEQERRLLRLRSLQYLERYIYLILFNSYLHLEKKDSWQRPFSLWMREVAAVAGVYEVLDGLGFPELEQLEDEEPLRKLRGRWRAQSGAGWPSRGDLV</sequence>